<name>SELN_HUMAN</name>
<comment type="function">
    <molecule>Isoform 2</molecule>
    <text evidence="12 14 16">Plays an important role in cell protection against oxidative stress and in the regulation of redox-related calcium homeostasis. Regulates the calcium level of the ER by protecting the calcium pump ATP2A2 against the oxidoreductase ERO1A-mediated oxidative damage. Within the ER, ERO1A activity increases the concentration of H(2)O(2), which attacks the luminal thiols in ATP2A2 and thus leads to cysteinyl sulfenic acid formation (-SOH) and SEPN1 reduces the SOH back to free thiol (-SH), thus restoring ATP2A2 activity (PubMed:25452428). Acts as a modulator of ryanodine receptor (RyR) activity: protects RyR from oxidation due to increased oxidative stress, or directly controls the RyR redox state, regulating the RyR-mediated calcium mobilization required for normal muscle development and differentiation (PubMed:18713863, PubMed:19557870).</text>
</comment>
<comment type="function">
    <text evidence="15">Essential for muscle regeneration and satellite cell maintenance in skeletal muscle (PubMed:21131290).</text>
</comment>
<comment type="subunit">
    <molecule>Isoform 2</molecule>
    <text evidence="12">Interacts with RYR1, RYR2 and RYR3 (PubMed:18713863).</text>
</comment>
<comment type="interaction">
    <interactant intactId="EBI-1751965">
        <id>Q9NZV5</id>
    </interactant>
    <interactant intactId="EBI-389883">
        <id>P16333</id>
        <label>NCK1</label>
    </interactant>
    <organismsDiffer>false</organismsDiffer>
    <experiments>2</experiments>
</comment>
<comment type="interaction">
    <interactant intactId="EBI-1751965">
        <id>Q9NZV5</id>
    </interactant>
    <interactant intactId="EBI-10182857">
        <id>O15466</id>
        <label>ST8SIA5</label>
    </interactant>
    <organismsDiffer>false</organismsDiffer>
    <experiments>2</experiments>
</comment>
<comment type="subcellular location">
    <molecule>Isoform 2</molecule>
    <subcellularLocation>
        <location evidence="7">Endoplasmic reticulum membrane</location>
    </subcellularLocation>
</comment>
<comment type="alternative products">
    <event type="alternative splicing"/>
    <isoform>
        <id>Q9NZV5-1</id>
        <name>1</name>
        <sequence type="displayed"/>
    </isoform>
    <isoform>
        <id>Q9NZV5-2</id>
        <name>2</name>
        <sequence type="described" ref="VSP_011372"/>
    </isoform>
</comment>
<comment type="tissue specificity">
    <text evidence="5 7">Isoform 1 and isoform 2 are expressed in skeletal muscle, brain, lung and placenta. Isoform 2 is also expressed in heart, diaphragm and stomach.</text>
</comment>
<comment type="domain">
    <molecule>Isoform 2</molecule>
    <text evidence="7">The N-terminus (first 61 amino acids) contains an endoplasmic reticulum addressing and retention targeting signal.</text>
</comment>
<comment type="PTM">
    <molecule>Isoform 2</molecule>
    <text evidence="7">N-glycosylated.</text>
</comment>
<comment type="disease" evidence="5 6 8 10 11 12 13">
    <disease id="DI-00795">
        <name>Congenital myopathy 3 with rigid spine</name>
        <acronym>CMYO3</acronym>
        <description>An autosomal recessive, slowly progressive muscular disorder apparent from birth or early childhood and characterized by hypotonia, proximal muscle weakness, poor axial muscle strength, scoliosis and neck weakness, and a variable degree of spinal rigidity. Most patients remain ambulatory. Early ventilatory insufficiency may lead to death by respiratory failure. Additional features may include facial muscle weakness, amyotrophy, joint contractures, distal hyperlaxity, pulmonary hypertension with secondary cardiac dysfunction, and insulin resistance in patients with a low BMI. Skeletal muscle biopsy typically shows multiminicores and other abnormal non-specific myopathic findings.</description>
        <dbReference type="MIM" id="602771"/>
    </disease>
    <text>The disease is caused by variants affecting the gene represented in this entry.</text>
</comment>
<comment type="miscellaneous">
    <molecule>Isoform 1</molecule>
    <text>The UGA codons present in position 127 and 462 are either a selenocysteine or a real stop codon.</text>
</comment>
<comment type="miscellaneous">
    <molecule>Isoform 2</molecule>
    <text evidence="20">The UGA codon present in position 428 is either a selenocysteine or a real stop codon.</text>
</comment>
<comment type="sequence caution" evidence="20">
    <conflict type="erroneous initiation">
        <sequence resource="EMBL-CDS" id="AAH15638"/>
    </conflict>
    <text>Truncated N-terminus.</text>
</comment>
<comment type="sequence caution" evidence="20">
    <conflict type="erroneous initiation">
        <sequence resource="EMBL-CDS" id="AAH42154"/>
    </conflict>
    <text>Truncated N-terminus.</text>
</comment>
<organism>
    <name type="scientific">Homo sapiens</name>
    <name type="common">Human</name>
    <dbReference type="NCBI Taxonomy" id="9606"/>
    <lineage>
        <taxon>Eukaryota</taxon>
        <taxon>Metazoa</taxon>
        <taxon>Chordata</taxon>
        <taxon>Craniata</taxon>
        <taxon>Vertebrata</taxon>
        <taxon>Euteleostomi</taxon>
        <taxon>Mammalia</taxon>
        <taxon>Eutheria</taxon>
        <taxon>Euarchontoglires</taxon>
        <taxon>Primates</taxon>
        <taxon>Haplorrhini</taxon>
        <taxon>Catarrhini</taxon>
        <taxon>Hominidae</taxon>
        <taxon>Homo</taxon>
    </lineage>
</organism>
<protein>
    <recommendedName>
        <fullName evidence="19">Selenoprotein N</fullName>
        <shortName evidence="19">SelN</shortName>
    </recommendedName>
</protein>
<gene>
    <name evidence="19 21" type="primary">SELENON</name>
    <name evidence="19" type="synonym">SELN</name>
    <name evidence="18 21" type="synonym">SEPN1</name>
</gene>
<reference key="1">
    <citation type="journal article" date="2001" name="Nat. Genet.">
        <title>Mutations in SEPN1 cause congenital muscular dystrophy with spinal rigidity and restrictive respiratory syndrome.</title>
        <authorList>
            <person name="Moghadaszadeh B."/>
            <person name="Petit N."/>
            <person name="Jaillard C."/>
            <person name="Brockington M."/>
            <person name="Roy S.Q."/>
            <person name="Merlini L."/>
            <person name="Romero N."/>
            <person name="Estournet B."/>
            <person name="Desguerre I."/>
            <person name="Chaigne D."/>
            <person name="Muntoni F."/>
            <person name="Topaloglu H."/>
            <person name="Guicheney P."/>
        </authorList>
    </citation>
    <scope>NUCLEOTIDE SEQUENCE [GENOMIC DNA / MRNA] (ISOFORM 1)</scope>
    <scope>VARIANTS CMYO3 GLU-273; ARG-293 AND GLN-466</scope>
    <scope>VARIANTS TYR-142 AND LYS-502</scope>
    <scope>TISSUE SPECIFICITY</scope>
</reference>
<reference key="2">
    <citation type="journal article" date="2006" name="Nature">
        <title>The DNA sequence and biological annotation of human chromosome 1.</title>
        <authorList>
            <person name="Gregory S.G."/>
            <person name="Barlow K.F."/>
            <person name="McLay K.E."/>
            <person name="Kaul R."/>
            <person name="Swarbreck D."/>
            <person name="Dunham A."/>
            <person name="Scott C.E."/>
            <person name="Howe K.L."/>
            <person name="Woodfine K."/>
            <person name="Spencer C.C.A."/>
            <person name="Jones M.C."/>
            <person name="Gillson C."/>
            <person name="Searle S."/>
            <person name="Zhou Y."/>
            <person name="Kokocinski F."/>
            <person name="McDonald L."/>
            <person name="Evans R."/>
            <person name="Phillips K."/>
            <person name="Atkinson A."/>
            <person name="Cooper R."/>
            <person name="Jones C."/>
            <person name="Hall R.E."/>
            <person name="Andrews T.D."/>
            <person name="Lloyd C."/>
            <person name="Ainscough R."/>
            <person name="Almeida J.P."/>
            <person name="Ambrose K.D."/>
            <person name="Anderson F."/>
            <person name="Andrew R.W."/>
            <person name="Ashwell R.I.S."/>
            <person name="Aubin K."/>
            <person name="Babbage A.K."/>
            <person name="Bagguley C.L."/>
            <person name="Bailey J."/>
            <person name="Beasley H."/>
            <person name="Bethel G."/>
            <person name="Bird C.P."/>
            <person name="Bray-Allen S."/>
            <person name="Brown J.Y."/>
            <person name="Brown A.J."/>
            <person name="Buckley D."/>
            <person name="Burton J."/>
            <person name="Bye J."/>
            <person name="Carder C."/>
            <person name="Chapman J.C."/>
            <person name="Clark S.Y."/>
            <person name="Clarke G."/>
            <person name="Clee C."/>
            <person name="Cobley V."/>
            <person name="Collier R.E."/>
            <person name="Corby N."/>
            <person name="Coville G.J."/>
            <person name="Davies J."/>
            <person name="Deadman R."/>
            <person name="Dunn M."/>
            <person name="Earthrowl M."/>
            <person name="Ellington A.G."/>
            <person name="Errington H."/>
            <person name="Frankish A."/>
            <person name="Frankland J."/>
            <person name="French L."/>
            <person name="Garner P."/>
            <person name="Garnett J."/>
            <person name="Gay L."/>
            <person name="Ghori M.R.J."/>
            <person name="Gibson R."/>
            <person name="Gilby L.M."/>
            <person name="Gillett W."/>
            <person name="Glithero R.J."/>
            <person name="Grafham D.V."/>
            <person name="Griffiths C."/>
            <person name="Griffiths-Jones S."/>
            <person name="Grocock R."/>
            <person name="Hammond S."/>
            <person name="Harrison E.S.I."/>
            <person name="Hart E."/>
            <person name="Haugen E."/>
            <person name="Heath P.D."/>
            <person name="Holmes S."/>
            <person name="Holt K."/>
            <person name="Howden P.J."/>
            <person name="Hunt A.R."/>
            <person name="Hunt S.E."/>
            <person name="Hunter G."/>
            <person name="Isherwood J."/>
            <person name="James R."/>
            <person name="Johnson C."/>
            <person name="Johnson D."/>
            <person name="Joy A."/>
            <person name="Kay M."/>
            <person name="Kershaw J.K."/>
            <person name="Kibukawa M."/>
            <person name="Kimberley A.M."/>
            <person name="King A."/>
            <person name="Knights A.J."/>
            <person name="Lad H."/>
            <person name="Laird G."/>
            <person name="Lawlor S."/>
            <person name="Leongamornlert D.A."/>
            <person name="Lloyd D.M."/>
            <person name="Loveland J."/>
            <person name="Lovell J."/>
            <person name="Lush M.J."/>
            <person name="Lyne R."/>
            <person name="Martin S."/>
            <person name="Mashreghi-Mohammadi M."/>
            <person name="Matthews L."/>
            <person name="Matthews N.S.W."/>
            <person name="McLaren S."/>
            <person name="Milne S."/>
            <person name="Mistry S."/>
            <person name="Moore M.J.F."/>
            <person name="Nickerson T."/>
            <person name="O'Dell C.N."/>
            <person name="Oliver K."/>
            <person name="Palmeiri A."/>
            <person name="Palmer S.A."/>
            <person name="Parker A."/>
            <person name="Patel D."/>
            <person name="Pearce A.V."/>
            <person name="Peck A.I."/>
            <person name="Pelan S."/>
            <person name="Phelps K."/>
            <person name="Phillimore B.J."/>
            <person name="Plumb R."/>
            <person name="Rajan J."/>
            <person name="Raymond C."/>
            <person name="Rouse G."/>
            <person name="Saenphimmachak C."/>
            <person name="Sehra H.K."/>
            <person name="Sheridan E."/>
            <person name="Shownkeen R."/>
            <person name="Sims S."/>
            <person name="Skuce C.D."/>
            <person name="Smith M."/>
            <person name="Steward C."/>
            <person name="Subramanian S."/>
            <person name="Sycamore N."/>
            <person name="Tracey A."/>
            <person name="Tromans A."/>
            <person name="Van Helmond Z."/>
            <person name="Wall M."/>
            <person name="Wallis J.M."/>
            <person name="White S."/>
            <person name="Whitehead S.L."/>
            <person name="Wilkinson J.E."/>
            <person name="Willey D.L."/>
            <person name="Williams H."/>
            <person name="Wilming L."/>
            <person name="Wray P.W."/>
            <person name="Wu Z."/>
            <person name="Coulson A."/>
            <person name="Vaudin M."/>
            <person name="Sulston J.E."/>
            <person name="Durbin R.M."/>
            <person name="Hubbard T."/>
            <person name="Wooster R."/>
            <person name="Dunham I."/>
            <person name="Carter N.P."/>
            <person name="McVean G."/>
            <person name="Ross M.T."/>
            <person name="Harrow J."/>
            <person name="Olson M.V."/>
            <person name="Beck S."/>
            <person name="Rogers J."/>
            <person name="Bentley D.R."/>
        </authorList>
    </citation>
    <scope>NUCLEOTIDE SEQUENCE [LARGE SCALE GENOMIC DNA]</scope>
</reference>
<reference key="3">
    <citation type="journal article" date="1999" name="J. Biol. Chem.">
        <title>Novel selenoproteins identified in silico and in vivo by using a conserved RNA structural motif.</title>
        <authorList>
            <person name="Lescure A."/>
            <person name="Gautheret D."/>
            <person name="Carbon P."/>
            <person name="Krol A."/>
        </authorList>
    </citation>
    <scope>NUCLEOTIDE SEQUENCE [MRNA] OF 86-590 (ISOFORM 2)</scope>
    <scope>VARIANT LYS-502</scope>
</reference>
<reference key="4">
    <citation type="journal article" date="2004" name="Genome Res.">
        <title>The status, quality, and expansion of the NIH full-length cDNA project: the Mammalian Gene Collection (MGC).</title>
        <authorList>
            <consortium name="The MGC Project Team"/>
        </authorList>
    </citation>
    <scope>NUCLEOTIDE SEQUENCE [LARGE SCALE MRNA] OF 428-590 (ISOFORMS 1/2)</scope>
    <scope>VARIANT LYS-502</scope>
    <source>
        <tissue>Lung</tissue>
    </source>
</reference>
<reference key="5">
    <citation type="journal article" date="2003" name="Hum. Mol. Genet.">
        <title>Selenoprotein N: an endoplasmic reticulum glycoprotein with an early developmental expression pattern.</title>
        <authorList>
            <person name="Petit N."/>
            <person name="Lescure A."/>
            <person name="Rederstorff M."/>
            <person name="Krol A."/>
            <person name="Moghadaszadeh B."/>
            <person name="Wewer U.M."/>
            <person name="Guicheney P."/>
        </authorList>
    </citation>
    <scope>SUBCELLULAR LOCATION (ISOFORM 2)</scope>
    <scope>TISSUE SPECIFICITY (ISOFORM 2)</scope>
    <scope>GLYCOSYLATION (ISOFORM 2)</scope>
    <scope>DOMAIN (ISOFORM 2)</scope>
</reference>
<reference key="6">
    <citation type="journal article" date="2006" name="Ann. Neurol.">
        <title>SEPN1: associated with congenital fiber-type disproportion and insulin resistance.</title>
        <authorList>
            <person name="Clarke N.F."/>
            <person name="Kidson W."/>
            <person name="Quijano-Roy S."/>
            <person name="Estournet B."/>
            <person name="Ferreiro A."/>
            <person name="Guicheney P."/>
            <person name="Manson J.I."/>
            <person name="Kornberg A.J."/>
            <person name="Shield L.K."/>
            <person name="North K.N."/>
        </authorList>
    </citation>
    <scope>INVOLVEMENT IN CMYO3</scope>
    <scope>VARIANT CMYO3 SER-315</scope>
</reference>
<reference key="7">
    <citation type="journal article" date="2008" name="Proc. Natl. Acad. Sci. U.S.A.">
        <title>Selenoprotein N is required for ryanodine receptor calcium release channel activity in human and zebrafish muscle.</title>
        <authorList>
            <person name="Jurynec M.J."/>
            <person name="Xia R."/>
            <person name="Mackrill J.J."/>
            <person name="Gunther D."/>
            <person name="Crawford T."/>
            <person name="Flanigan K.M."/>
            <person name="Abramson J.J."/>
            <person name="Howard M.T."/>
            <person name="Grunwald D.J."/>
        </authorList>
    </citation>
    <scope>FUNCTION (ISOFORM 2)</scope>
    <scope>INTERACTION WITH RYR1; RYR2 AND RYR3 (ISOFORM 2)</scope>
    <scope>CHARACTERIZATION OF VARIANT CMYO3 GLN-466</scope>
</reference>
<reference key="8">
    <citation type="journal article" date="2009" name="Ann. Neurol.">
        <title>Oxidative stress in SEPN1-related myopathy: from pathophysiology to treatment.</title>
        <authorList>
            <person name="Arbogast S."/>
            <person name="Beuvin M."/>
            <person name="Fraysse B."/>
            <person name="Zhou H."/>
            <person name="Muntoni F."/>
            <person name="Ferreiro A."/>
        </authorList>
    </citation>
    <scope>FUNCTION (ISOFORM 2)</scope>
</reference>
<reference key="9">
    <citation type="journal article" date="2010" name="Antioxid. Redox Signal.">
        <title>Selenoproteins and protection against oxidative stress: selenoprotein N as a novel player at the crossroads of redox signaling and calcium homeostasis.</title>
        <authorList>
            <person name="Arbogast S."/>
            <person name="Ferreiro A."/>
        </authorList>
    </citation>
    <scope>REVIEW</scope>
</reference>
<reference key="10">
    <citation type="journal article" date="2011" name="Hum. Mol. Genet.">
        <title>Satellite cell loss and impaired muscle regeneration in selenoprotein N deficiency.</title>
        <authorList>
            <person name="Castets P."/>
            <person name="Bertrand A.T."/>
            <person name="Beuvin M."/>
            <person name="Ferry A."/>
            <person name="Le Grand F."/>
            <person name="Castets M."/>
            <person name="Chazot G."/>
            <person name="Rederstorff M."/>
            <person name="Krol A."/>
            <person name="Lescure A."/>
            <person name="Romero N.B."/>
            <person name="Guicheney P."/>
            <person name="Allamand V."/>
        </authorList>
    </citation>
    <scope>FUNCTION</scope>
</reference>
<reference key="11">
    <citation type="journal article" date="2012" name="J. Mol. Med.">
        <title>Selenoprotein N in skeletal muscle: from diseases to function.</title>
        <authorList>
            <person name="Castets P."/>
            <person name="Lescure A."/>
            <person name="Guicheney P."/>
            <person name="Allamand V."/>
        </authorList>
    </citation>
    <scope>REVIEW</scope>
</reference>
<reference key="12">
    <citation type="journal article" date="2014" name="J. Proteomics">
        <title>An enzyme assisted RP-RPLC approach for in-depth analysis of human liver phosphoproteome.</title>
        <authorList>
            <person name="Bian Y."/>
            <person name="Song C."/>
            <person name="Cheng K."/>
            <person name="Dong M."/>
            <person name="Wang F."/>
            <person name="Huang J."/>
            <person name="Sun D."/>
            <person name="Wang L."/>
            <person name="Ye M."/>
            <person name="Zou H."/>
        </authorList>
    </citation>
    <scope>IDENTIFICATION BY MASS SPECTROMETRY [LARGE SCALE ANALYSIS]</scope>
    <source>
        <tissue>Liver</tissue>
    </source>
</reference>
<reference key="13">
    <citation type="journal article" date="2015" name="Hum. Mol. Genet.">
        <title>SEPN1, an endoplasmic reticulum-localized selenoprotein linked to skeletal muscle pathology, counteracts hyperoxidation by means of redox-regulating SERCA2 pump activity.</title>
        <authorList>
            <person name="Marino M."/>
            <person name="Stoilova T."/>
            <person name="Giorgi C."/>
            <person name="Bachi A."/>
            <person name="Cattaneo A."/>
            <person name="Auricchio A."/>
            <person name="Pinton P."/>
            <person name="Zito E."/>
        </authorList>
    </citation>
    <scope>FUNCTION</scope>
</reference>
<reference key="14">
    <citation type="journal article" date="2016" name="J. Biol. Chem.">
        <title>Selenoprotein gene nomenclature.</title>
        <authorList>
            <person name="Gladyshev V.N."/>
            <person name="Arner E.S."/>
            <person name="Berry M.J."/>
            <person name="Brigelius-Flohe R."/>
            <person name="Bruford E.A."/>
            <person name="Burk R.F."/>
            <person name="Carlson B.A."/>
            <person name="Castellano S."/>
            <person name="Chavatte L."/>
            <person name="Conrad M."/>
            <person name="Copeland P.R."/>
            <person name="Diamond A.M."/>
            <person name="Driscoll D.M."/>
            <person name="Ferreiro A."/>
            <person name="Flohe L."/>
            <person name="Green F.R."/>
            <person name="Guigo R."/>
            <person name="Handy D.E."/>
            <person name="Hatfield D.L."/>
            <person name="Hesketh J."/>
            <person name="Hoffmann P.R."/>
            <person name="Holmgren A."/>
            <person name="Hondal R.J."/>
            <person name="Howard M.T."/>
            <person name="Huang K."/>
            <person name="Kim H.Y."/>
            <person name="Kim I.Y."/>
            <person name="Koehrle J."/>
            <person name="Krol A."/>
            <person name="Kryukov G.V."/>
            <person name="Lee B.J."/>
            <person name="Lee B.C."/>
            <person name="Lei X.G."/>
            <person name="Liu Q."/>
            <person name="Lescure A."/>
            <person name="Lobanov A.V."/>
            <person name="Loscalzo J."/>
            <person name="Maiorino M."/>
            <person name="Mariotti M."/>
            <person name="Sandeep Prabhu K."/>
            <person name="Rayman M.P."/>
            <person name="Rozovsky S."/>
            <person name="Salinas G."/>
            <person name="Schmidt E.E."/>
            <person name="Schomburg L."/>
            <person name="Schweizer U."/>
            <person name="Simonovic M."/>
            <person name="Sunde R.A."/>
            <person name="Tsuji P.A."/>
            <person name="Tweedie S."/>
            <person name="Ursini F."/>
            <person name="Whanger P.D."/>
            <person name="Zhang Y."/>
        </authorList>
    </citation>
    <scope>NOMENCLATURE</scope>
</reference>
<reference key="15">
    <citation type="journal article" date="2002" name="Am. J. Hum. Genet.">
        <title>Mutations of the selenoprotein N gene, which is implicated in rigid spine muscular dystrophy, cause the classical phenotype of multiminicore disease: reassessing the nosology of early-onset myopathies.</title>
        <authorList>
            <person name="Ferreiro A."/>
            <person name="Quijano-Roy S."/>
            <person name="Pichereau C."/>
            <person name="Moghadaszadeh B."/>
            <person name="Goemans N."/>
            <person name="Boennemann C."/>
            <person name="Jungbluth H."/>
            <person name="Straub V."/>
            <person name="Villanova M."/>
            <person name="Leroy J.-P."/>
            <person name="Romero N.B."/>
            <person name="Martin J.-J."/>
            <person name="Muntoni F."/>
            <person name="Voit T."/>
            <person name="Estournet B."/>
            <person name="Richard P."/>
            <person name="Fardeau M."/>
            <person name="Guicheney P."/>
        </authorList>
    </citation>
    <scope>VARIANTS CMYO3 ARG-293; SER-315; ILE-340; SER-453; GLY-462 AND GLN-466</scope>
</reference>
<reference key="16">
    <citation type="journal article" date="2004" name="Ann. Neurol.">
        <title>Desmin-related myopathy with Mallory body-like inclusions is caused by mutations of the selenoprotein N gene.</title>
        <authorList>
            <person name="Ferreiro A."/>
            <person name="Ceuterick-de Groote C."/>
            <person name="Marks J.J."/>
            <person name="Goemans N."/>
            <person name="Schreiber G."/>
            <person name="Hanefeld F."/>
            <person name="Fardeau M."/>
            <person name="Martin J.-J."/>
            <person name="Goebel H.H."/>
            <person name="Richard P."/>
            <person name="Guicheney P."/>
            <person name="Bonnemann C.G."/>
        </authorList>
    </citation>
    <scope>VARIANT CMYO3 SER-315</scope>
</reference>
<reference key="17">
    <citation type="journal article" date="2005" name="Neurology">
        <title>Rigid spine muscular dystrophy due to SEPN1 mutation presenting as cor pulmonale.</title>
        <authorList>
            <person name="Venance S.L."/>
            <person name="Koopman W.J."/>
            <person name="Miskie B.A."/>
            <person name="Hegele R.A."/>
            <person name="Hahn A.F."/>
        </authorList>
    </citation>
    <scope>VARIANT CMYO3 SER-315</scope>
</reference>
<reference key="18">
    <citation type="journal article" date="2009" name="Hum. Mutat.">
        <title>A mutation in the SEPN1 selenocysteine redefinition element (SRE) reduces selenocysteine incorporation and leads to SEPN1-related myopathy.</title>
        <authorList>
            <person name="Maiti B."/>
            <person name="Arbogast S."/>
            <person name="Allamand V."/>
            <person name="Moyle M.W."/>
            <person name="Anderson C.B."/>
            <person name="Richard P."/>
            <person name="Guicheney P."/>
            <person name="Ferreiro A."/>
            <person name="Flanigan K.M."/>
            <person name="Howard M.T."/>
        </authorList>
    </citation>
    <scope>VARIANTS CMYO3 VAL-463; GLN-466; GLN-469 AND TRP-469</scope>
</reference>
<keyword id="KW-0025">Alternative splicing</keyword>
<keyword id="KW-0911">Desmin-related myopathy</keyword>
<keyword id="KW-0225">Disease variant</keyword>
<keyword id="KW-0256">Endoplasmic reticulum</keyword>
<keyword id="KW-0325">Glycoprotein</keyword>
<keyword id="KW-0472">Membrane</keyword>
<keyword id="KW-1060">Myofibrillar myopathy</keyword>
<keyword id="KW-0560">Oxidoreductase</keyword>
<keyword id="KW-1267">Proteomics identification</keyword>
<keyword id="KW-1185">Reference proteome</keyword>
<keyword id="KW-0712">Selenocysteine</keyword>
<keyword id="KW-0732">Signal</keyword>
<dbReference type="EMBL" id="AJ306399">
    <property type="protein sequence ID" value="CAC83791.1"/>
    <property type="molecule type" value="mRNA"/>
</dbReference>
<dbReference type="EMBL" id="AJ306398">
    <property type="protein sequence ID" value="CAC83790.1"/>
    <property type="molecule type" value="Genomic_DNA"/>
</dbReference>
<dbReference type="EMBL" id="AL020996">
    <property type="status" value="NOT_ANNOTATED_CDS"/>
    <property type="molecule type" value="Genomic_DNA"/>
</dbReference>
<dbReference type="EMBL" id="AF166125">
    <property type="protein sequence ID" value="AAF21430.1"/>
    <property type="molecule type" value="mRNA"/>
</dbReference>
<dbReference type="EMBL" id="BC015638">
    <property type="protein sequence ID" value="AAH15638.1"/>
    <property type="status" value="ALT_INIT"/>
    <property type="molecule type" value="mRNA"/>
</dbReference>
<dbReference type="EMBL" id="BC042154">
    <property type="protein sequence ID" value="AAH42154.1"/>
    <property type="status" value="ALT_INIT"/>
    <property type="molecule type" value="mRNA"/>
</dbReference>
<dbReference type="CCDS" id="CCDS41282.1">
    <molecule id="Q9NZV5-1"/>
</dbReference>
<dbReference type="CCDS" id="CCDS41283.1">
    <molecule id="Q9NZV5-2"/>
</dbReference>
<dbReference type="RefSeq" id="NP_065184.2">
    <molecule id="Q9NZV5-1"/>
    <property type="nucleotide sequence ID" value="NM_020451.2"/>
</dbReference>
<dbReference type="RefSeq" id="NP_996809.1">
    <molecule id="Q9NZV5-2"/>
    <property type="nucleotide sequence ID" value="NM_206926.2"/>
</dbReference>
<dbReference type="BioGRID" id="121439">
    <property type="interactions" value="96"/>
</dbReference>
<dbReference type="FunCoup" id="Q9NZV5">
    <property type="interactions" value="452"/>
</dbReference>
<dbReference type="IntAct" id="Q9NZV5">
    <property type="interactions" value="62"/>
</dbReference>
<dbReference type="MINT" id="Q9NZV5"/>
<dbReference type="STRING" id="9606.ENSP00000355141"/>
<dbReference type="GlyCosmos" id="Q9NZV5">
    <property type="glycosylation" value="6 sites, 1 glycan"/>
</dbReference>
<dbReference type="GlyGen" id="Q9NZV5">
    <property type="glycosylation" value="6 sites, 5 N-linked glycans (3 sites), 1 O-linked glycan (1 site)"/>
</dbReference>
<dbReference type="iPTMnet" id="Q9NZV5"/>
<dbReference type="PhosphoSitePlus" id="Q9NZV5"/>
<dbReference type="BioMuta" id="SELENON"/>
<dbReference type="DMDM" id="317373588"/>
<dbReference type="jPOST" id="Q9NZV5"/>
<dbReference type="MassIVE" id="Q9NZV5"/>
<dbReference type="PaxDb" id="9606-ENSP00000355141"/>
<dbReference type="PeptideAtlas" id="Q9NZV5"/>
<dbReference type="ProteomicsDB" id="83517">
    <molecule id="Q9NZV5-1"/>
</dbReference>
<dbReference type="ProteomicsDB" id="83518">
    <molecule id="Q9NZV5-2"/>
</dbReference>
<dbReference type="Pumba" id="Q9NZV5"/>
<dbReference type="Antibodypedia" id="56475">
    <property type="antibodies" value="132 antibodies from 20 providers"/>
</dbReference>
<dbReference type="DNASU" id="57190"/>
<dbReference type="Ensembl" id="ENST00000361547.7">
    <molecule id="Q9NZV5-1"/>
    <property type="protein sequence ID" value="ENSP00000355141.2"/>
    <property type="gene ID" value="ENSG00000162430.18"/>
</dbReference>
<dbReference type="Ensembl" id="ENST00000374315.1">
    <molecule id="Q9NZV5-2"/>
    <property type="protein sequence ID" value="ENSP00000363434.1"/>
    <property type="gene ID" value="ENSG00000162430.18"/>
</dbReference>
<dbReference type="GeneID" id="57190"/>
<dbReference type="KEGG" id="hsa:57190"/>
<dbReference type="MANE-Select" id="ENST00000361547.7">
    <property type="protein sequence ID" value="ENSP00000355141.2"/>
    <property type="RefSeq nucleotide sequence ID" value="NM_020451.3"/>
    <property type="RefSeq protein sequence ID" value="NP_065184.2"/>
</dbReference>
<dbReference type="UCSC" id="uc021ojk.2">
    <molecule id="Q9NZV5-1"/>
    <property type="organism name" value="human"/>
</dbReference>
<dbReference type="AGR" id="HGNC:15999"/>
<dbReference type="CTD" id="57190"/>
<dbReference type="DisGeNET" id="57190"/>
<dbReference type="GeneCards" id="SELENON"/>
<dbReference type="HGNC" id="HGNC:15999">
    <property type="gene designation" value="SELENON"/>
</dbReference>
<dbReference type="HPA" id="ENSG00000162430">
    <property type="expression patterns" value="Low tissue specificity"/>
</dbReference>
<dbReference type="MalaCards" id="SELENON"/>
<dbReference type="MIM" id="602771">
    <property type="type" value="phenotype"/>
</dbReference>
<dbReference type="MIM" id="606210">
    <property type="type" value="gene"/>
</dbReference>
<dbReference type="neXtProt" id="NX_Q9NZV5"/>
<dbReference type="OpenTargets" id="ENSG00000162430"/>
<dbReference type="Orphanet" id="324604">
    <property type="disease" value="Classic multiminicore myopathy"/>
</dbReference>
<dbReference type="Orphanet" id="2020">
    <property type="disease" value="Congenital fiber-type disproportion myopathy"/>
</dbReference>
<dbReference type="Orphanet" id="84132">
    <property type="disease" value="Desmin-related myopathy with Mallory body-like inclusions"/>
</dbReference>
<dbReference type="Orphanet" id="97244">
    <property type="disease" value="Rigid spine syndrome"/>
</dbReference>
<dbReference type="PharmGKB" id="PA38079"/>
<dbReference type="VEuPathDB" id="HostDB:ENSG00000162430"/>
<dbReference type="eggNOG" id="ENOG502QREI">
    <property type="taxonomic scope" value="Eukaryota"/>
</dbReference>
<dbReference type="GeneTree" id="ENSGT00390000005972"/>
<dbReference type="HOGENOM" id="CLU_042746_1_0_1"/>
<dbReference type="InParanoid" id="Q9NZV5"/>
<dbReference type="OMA" id="EITWQQE"/>
<dbReference type="OrthoDB" id="10062435at2759"/>
<dbReference type="PAN-GO" id="Q9NZV5">
    <property type="GO annotations" value="3 GO annotations based on evolutionary models"/>
</dbReference>
<dbReference type="PhylomeDB" id="Q9NZV5"/>
<dbReference type="TreeFam" id="TF329622"/>
<dbReference type="PathwayCommons" id="Q9NZV5"/>
<dbReference type="SignaLink" id="Q9NZV5"/>
<dbReference type="BioGRID-ORCS" id="57190">
    <property type="hits" value="6 hits in 1152 CRISPR screens"/>
</dbReference>
<dbReference type="ChiTaRS" id="SELENON">
    <property type="organism name" value="human"/>
</dbReference>
<dbReference type="GeneWiki" id="SEPN1"/>
<dbReference type="GenomeRNAi" id="57190"/>
<dbReference type="Pharos" id="Q9NZV5">
    <property type="development level" value="Tbio"/>
</dbReference>
<dbReference type="PRO" id="PR:Q9NZV5"/>
<dbReference type="Proteomes" id="UP000005640">
    <property type="component" value="Chromosome 1"/>
</dbReference>
<dbReference type="RNAct" id="Q9NZV5">
    <property type="molecule type" value="protein"/>
</dbReference>
<dbReference type="Bgee" id="ENSG00000162430">
    <property type="expression patterns" value="Expressed in stromal cell of endometrium and 175 other cell types or tissues"/>
</dbReference>
<dbReference type="ExpressionAtlas" id="Q9NZV5">
    <property type="expression patterns" value="baseline and differential"/>
</dbReference>
<dbReference type="GO" id="GO:0005789">
    <property type="term" value="C:endoplasmic reticulum membrane"/>
    <property type="evidence" value="ECO:0000314"/>
    <property type="project" value="MGI"/>
</dbReference>
<dbReference type="GO" id="GO:0044233">
    <property type="term" value="C:mitochondria-associated endoplasmic reticulum membrane contact site"/>
    <property type="evidence" value="ECO:0007669"/>
    <property type="project" value="Ensembl"/>
</dbReference>
<dbReference type="GO" id="GO:0031966">
    <property type="term" value="C:mitochondrial membrane"/>
    <property type="evidence" value="ECO:0007669"/>
    <property type="project" value="Ensembl"/>
</dbReference>
<dbReference type="GO" id="GO:0005509">
    <property type="term" value="F:calcium ion binding"/>
    <property type="evidence" value="ECO:0007669"/>
    <property type="project" value="InterPro"/>
</dbReference>
<dbReference type="GO" id="GO:0016491">
    <property type="term" value="F:oxidoreductase activity"/>
    <property type="evidence" value="ECO:0007669"/>
    <property type="project" value="UniProtKB-KW"/>
</dbReference>
<dbReference type="GO" id="GO:0046034">
    <property type="term" value="P:ATP metabolic process"/>
    <property type="evidence" value="ECO:0007669"/>
    <property type="project" value="Ensembl"/>
</dbReference>
<dbReference type="GO" id="GO:0055074">
    <property type="term" value="P:calcium ion homeostasis"/>
    <property type="evidence" value="ECO:0000315"/>
    <property type="project" value="UniProtKB"/>
</dbReference>
<dbReference type="GO" id="GO:0070509">
    <property type="term" value="P:calcium ion import"/>
    <property type="evidence" value="ECO:0007669"/>
    <property type="project" value="Ensembl"/>
</dbReference>
<dbReference type="GO" id="GO:0045454">
    <property type="term" value="P:cell redox homeostasis"/>
    <property type="evidence" value="ECO:0007669"/>
    <property type="project" value="Ensembl"/>
</dbReference>
<dbReference type="GO" id="GO:0071313">
    <property type="term" value="P:cellular response to caffeine"/>
    <property type="evidence" value="ECO:0007669"/>
    <property type="project" value="Ensembl"/>
</dbReference>
<dbReference type="GO" id="GO:0034599">
    <property type="term" value="P:cellular response to oxidative stress"/>
    <property type="evidence" value="ECO:0007669"/>
    <property type="project" value="Ensembl"/>
</dbReference>
<dbReference type="GO" id="GO:0030199">
    <property type="term" value="P:collagen fibril organization"/>
    <property type="evidence" value="ECO:0007669"/>
    <property type="project" value="Ensembl"/>
</dbReference>
<dbReference type="GO" id="GO:0002086">
    <property type="term" value="P:diaphragm contraction"/>
    <property type="evidence" value="ECO:0007669"/>
    <property type="project" value="Ensembl"/>
</dbReference>
<dbReference type="GO" id="GO:0006112">
    <property type="term" value="P:energy reserve metabolic process"/>
    <property type="evidence" value="ECO:0007669"/>
    <property type="project" value="Ensembl"/>
</dbReference>
<dbReference type="GO" id="GO:0010467">
    <property type="term" value="P:gene expression"/>
    <property type="evidence" value="ECO:0007669"/>
    <property type="project" value="Ensembl"/>
</dbReference>
<dbReference type="GO" id="GO:0019852">
    <property type="term" value="P:L-ascorbic acid metabolic process"/>
    <property type="evidence" value="ECO:0007669"/>
    <property type="project" value="Ensembl"/>
</dbReference>
<dbReference type="GO" id="GO:0015882">
    <property type="term" value="P:L-ascorbic acid transmembrane transport"/>
    <property type="evidence" value="ECO:0007669"/>
    <property type="project" value="Ensembl"/>
</dbReference>
<dbReference type="GO" id="GO:0048286">
    <property type="term" value="P:lung alveolus development"/>
    <property type="evidence" value="ECO:0007669"/>
    <property type="project" value="Ensembl"/>
</dbReference>
<dbReference type="GO" id="GO:0044091">
    <property type="term" value="P:membrane biogenesis"/>
    <property type="evidence" value="ECO:0007669"/>
    <property type="project" value="Ensembl"/>
</dbReference>
<dbReference type="GO" id="GO:0061024">
    <property type="term" value="P:membrane organization"/>
    <property type="evidence" value="ECO:0007669"/>
    <property type="project" value="Ensembl"/>
</dbReference>
<dbReference type="GO" id="GO:0022614">
    <property type="term" value="P:membrane to membrane docking"/>
    <property type="evidence" value="ECO:0007669"/>
    <property type="project" value="Ensembl"/>
</dbReference>
<dbReference type="GO" id="GO:0006851">
    <property type="term" value="P:mitochondrial calcium ion transmembrane transport"/>
    <property type="evidence" value="ECO:0007669"/>
    <property type="project" value="Ensembl"/>
</dbReference>
<dbReference type="GO" id="GO:0007005">
    <property type="term" value="P:mitochondrion organization"/>
    <property type="evidence" value="ECO:0007669"/>
    <property type="project" value="Ensembl"/>
</dbReference>
<dbReference type="GO" id="GO:1990456">
    <property type="term" value="P:mitochondrion-endoplasmic reticulum membrane tethering"/>
    <property type="evidence" value="ECO:0007669"/>
    <property type="project" value="Ensembl"/>
</dbReference>
<dbReference type="GO" id="GO:0033555">
    <property type="term" value="P:multicellular organismal response to stress"/>
    <property type="evidence" value="ECO:0007669"/>
    <property type="project" value="Ensembl"/>
</dbReference>
<dbReference type="GO" id="GO:1902884">
    <property type="term" value="P:positive regulation of response to oxidative stress"/>
    <property type="evidence" value="ECO:0000315"/>
    <property type="project" value="UniProtKB"/>
</dbReference>
<dbReference type="GO" id="GO:0014858">
    <property type="term" value="P:positive regulation of skeletal muscle cell proliferation"/>
    <property type="evidence" value="ECO:0007669"/>
    <property type="project" value="Ensembl"/>
</dbReference>
<dbReference type="GO" id="GO:0060314">
    <property type="term" value="P:regulation of ryanodine-sensitive calcium-release channel activity"/>
    <property type="evidence" value="ECO:0000315"/>
    <property type="project" value="UniProtKB"/>
</dbReference>
<dbReference type="GO" id="GO:0034976">
    <property type="term" value="P:response to endoplasmic reticulum stress"/>
    <property type="evidence" value="ECO:0007669"/>
    <property type="project" value="Ensembl"/>
</dbReference>
<dbReference type="GO" id="GO:0014873">
    <property type="term" value="P:response to muscle activity involved in regulation of muscle adaptation"/>
    <property type="evidence" value="ECO:0007669"/>
    <property type="project" value="Ensembl"/>
</dbReference>
<dbReference type="GO" id="GO:0048741">
    <property type="term" value="P:skeletal muscle fiber development"/>
    <property type="evidence" value="ECO:0000318"/>
    <property type="project" value="GO_Central"/>
</dbReference>
<dbReference type="GO" id="GO:0014816">
    <property type="term" value="P:skeletal muscle satellite cell differentiation"/>
    <property type="evidence" value="ECO:0007669"/>
    <property type="project" value="Ensembl"/>
</dbReference>
<dbReference type="GO" id="GO:0014834">
    <property type="term" value="P:skeletal muscle satellite cell maintenance involved in skeletal muscle regeneration"/>
    <property type="evidence" value="ECO:0007669"/>
    <property type="project" value="Ensembl"/>
</dbReference>
<dbReference type="GO" id="GO:0007179">
    <property type="term" value="P:transforming growth factor beta receptor signaling pathway"/>
    <property type="evidence" value="ECO:0007669"/>
    <property type="project" value="Ensembl"/>
</dbReference>
<dbReference type="InterPro" id="IPR002048">
    <property type="entry name" value="EF_hand_dom"/>
</dbReference>
<dbReference type="PANTHER" id="PTHR16213">
    <property type="entry name" value="SELENOPROTEIN N"/>
    <property type="match status" value="1"/>
</dbReference>
<dbReference type="PANTHER" id="PTHR16213:SF78">
    <property type="entry name" value="SELENOPROTEIN N"/>
    <property type="match status" value="1"/>
</dbReference>
<dbReference type="PROSITE" id="PS50222">
    <property type="entry name" value="EF_HAND_2"/>
    <property type="match status" value="1"/>
</dbReference>
<proteinExistence type="evidence at protein level"/>
<feature type="signal peptide" evidence="1">
    <location>
        <begin position="1"/>
        <end position="43"/>
    </location>
</feature>
<feature type="chain" id="PRO_0000022311" description="Selenoprotein N">
    <location>
        <begin position="44"/>
        <end position="590"/>
    </location>
</feature>
<feature type="domain" description="EF-hand" evidence="2">
    <location>
        <begin position="67"/>
        <end position="102"/>
    </location>
</feature>
<feature type="region of interest" description="Disordered" evidence="3">
    <location>
        <begin position="1"/>
        <end position="26"/>
    </location>
</feature>
<feature type="compositionally biased region" description="Pro residues" evidence="3">
    <location>
        <begin position="9"/>
        <end position="23"/>
    </location>
</feature>
<feature type="non-standard amino acid" description="Selenocysteine">
    <location>
        <position position="127"/>
    </location>
</feature>
<feature type="non-standard amino acid" description="Selenocysteine">
    <location>
        <position position="462"/>
    </location>
</feature>
<feature type="glycosylation site" description="N-linked (GlcNAc...) asparagine" evidence="1">
    <location>
        <position position="126"/>
    </location>
</feature>
<feature type="glycosylation site" description="N-linked (GlcNAc...) asparagine" evidence="1">
    <location>
        <position position="190"/>
    </location>
</feature>
<feature type="glycosylation site" description="N-linked (GlcNAc...) asparagine" evidence="1">
    <location>
        <position position="483"/>
    </location>
</feature>
<feature type="glycosylation site" description="N-linked (GlcNAc...) asparagine" evidence="1">
    <location>
        <position position="505"/>
    </location>
</feature>
<feature type="glycosylation site" description="N-linked (GlcNAc...) asparagine" evidence="1">
    <location>
        <position position="531"/>
    </location>
</feature>
<feature type="splice variant" id="VSP_011372" description="In isoform 2." evidence="17">
    <location>
        <begin position="102"/>
        <end position="135"/>
    </location>
</feature>
<feature type="sequence variant" id="VAR_038845" description="In dbSNP:rs35019869.">
    <original>T</original>
    <variation>A</variation>
    <location>
        <position position="137"/>
    </location>
</feature>
<feature type="sequence variant" id="VAR_038846" description="In dbSNP:rs7349185." evidence="5">
    <original>C</original>
    <variation>Y</variation>
    <location>
        <position position="142"/>
    </location>
</feature>
<feature type="sequence variant" id="VAR_019635" description="In CMYO3; dbSNP:rs121908182." evidence="5">
    <original>G</original>
    <variation>E</variation>
    <location>
        <position position="273"/>
    </location>
</feature>
<feature type="sequence variant" id="VAR_019636" description="In CMYO3; dbSNP:rs776738184." evidence="5 6">
    <original>H</original>
    <variation>R</variation>
    <location>
        <position position="293"/>
    </location>
</feature>
<feature type="sequence variant" id="VAR_019637" description="In CMYO3; dbSNP:rs121908188." evidence="6 8 10 11">
    <original>G</original>
    <variation>S</variation>
    <location>
        <position position="315"/>
    </location>
</feature>
<feature type="sequence variant" id="VAR_019638" description="In CMYO3; dbSNP:rs749911126." evidence="6">
    <original>N</original>
    <variation>I</variation>
    <location>
        <position position="340"/>
    </location>
</feature>
<feature type="sequence variant" id="VAR_019639" description="In CMYO3; dbSNP:rs121908186." evidence="6">
    <original>W</original>
    <variation>S</variation>
    <location>
        <position position="453"/>
    </location>
</feature>
<feature type="sequence variant" id="VAR_019640" description="In CMYO3; dbSNP:rs121908187." evidence="6">
    <original>U</original>
    <variation>G</variation>
    <location>
        <position position="462"/>
    </location>
</feature>
<feature type="sequence variant" id="VAR_058462" description="In CMYO3." evidence="13">
    <original>G</original>
    <variation>V</variation>
    <location>
        <position position="463"/>
    </location>
</feature>
<feature type="sequence variant" id="VAR_019641" description="In CMYO3; decreased function in the regulation of ryanodine receptor activity; dbSNP:rs121908185." evidence="5 6 12 13">
    <original>R</original>
    <variation>Q</variation>
    <location>
        <position position="466"/>
    </location>
</feature>
<feature type="sequence variant" id="VAR_058463" description="In CMYO3; dbSNP:rs779162837." evidence="13">
    <original>R</original>
    <variation>Q</variation>
    <location>
        <position position="469"/>
    </location>
</feature>
<feature type="sequence variant" id="VAR_058464" description="In CMYO3; dbSNP:rs756927098." evidence="13">
    <original>R</original>
    <variation>W</variation>
    <location>
        <position position="469"/>
    </location>
</feature>
<feature type="sequence variant" id="VAR_038847" description="In dbSNP:rs2294228." evidence="4 5 9">
    <original>N</original>
    <variation>K</variation>
    <location>
        <position position="502"/>
    </location>
</feature>
<feature type="sequence conflict" description="In Ref. 3; AAF21430." evidence="20" ref="3">
    <original>G</original>
    <variation>S</variation>
    <location>
        <position position="247"/>
    </location>
</feature>
<evidence type="ECO:0000255" key="1"/>
<evidence type="ECO:0000255" key="2">
    <source>
        <dbReference type="PROSITE-ProRule" id="PRU00448"/>
    </source>
</evidence>
<evidence type="ECO:0000256" key="3">
    <source>
        <dbReference type="SAM" id="MobiDB-lite"/>
    </source>
</evidence>
<evidence type="ECO:0000269" key="4">
    <source>
    </source>
</evidence>
<evidence type="ECO:0000269" key="5">
    <source>
    </source>
</evidence>
<evidence type="ECO:0000269" key="6">
    <source>
    </source>
</evidence>
<evidence type="ECO:0000269" key="7">
    <source>
    </source>
</evidence>
<evidence type="ECO:0000269" key="8">
    <source>
    </source>
</evidence>
<evidence type="ECO:0000269" key="9">
    <source>
    </source>
</evidence>
<evidence type="ECO:0000269" key="10">
    <source>
    </source>
</evidence>
<evidence type="ECO:0000269" key="11">
    <source>
    </source>
</evidence>
<evidence type="ECO:0000269" key="12">
    <source>
    </source>
</evidence>
<evidence type="ECO:0000269" key="13">
    <source>
    </source>
</evidence>
<evidence type="ECO:0000269" key="14">
    <source>
    </source>
</evidence>
<evidence type="ECO:0000269" key="15">
    <source>
    </source>
</evidence>
<evidence type="ECO:0000269" key="16">
    <source>
    </source>
</evidence>
<evidence type="ECO:0000303" key="17">
    <source>
    </source>
</evidence>
<evidence type="ECO:0000303" key="18">
    <source>
    </source>
</evidence>
<evidence type="ECO:0000303" key="19">
    <source>
    </source>
</evidence>
<evidence type="ECO:0000305" key="20"/>
<evidence type="ECO:0000312" key="21">
    <source>
        <dbReference type="HGNC" id="HGNC:15999"/>
    </source>
</evidence>
<sequence length="590" mass="65813">MGRARPGQRGPPSPGPAAQPPAPPRRRARSLALLGALLAAAAAAAVRVCARHAEAQAAARQELALKTLGTDGLFLFSSLDTDGDMYISPEEFKPIAEKLTGSCSVTQTGVQWCSHSSLQPQLPWLNUSSCLSLLRSTPAASCEEEELPPDPSEETLTIEARFQPLLPETMTKSKDGFLGVSRLALSGLRNWTAAASPSAVFATRHFQPFLPPPGQELGEPWWIIPSELSMFTGYLSNNRFYPPPPKGKEVIIHRLLSMFHPRPFVKTRFAPQGAVACLTAISDFYYTVMFRIHAEFQLSEPPDFPFWFSPAQFTGHIILSKDATHVRDFRLFVPNHRSLNVDMEWLYGASESSNMEVDIGYIPQMELEATGPSVPSVILDEDGSMIDSHLPSGEPLQFVFEEIKWQQELSWEEAARRLEVAMYPFKKVSYLPFTEAFDRAKAENKLVHSILLWGALDDQSCUGSGRTLRETVLESSPILTLLNESFISTWSLVKELEELQNNQENSSHQKLAGLHLEKYSFPVEMMICLPNGTVVHHINANYFLDITSVKPEEIESNLFSFSSTFEDPSTATYMQFLKEGLRRGLPLLQP</sequence>
<accession>Q9NZV5</accession>
<accession>A6NJG8</accession>
<accession>A8MQ64</accession>
<accession>Q6PI70</accession>
<accession>Q969F6</accession>
<accession>Q9NUI6</accession>